<keyword id="KW-0963">Cytoplasm</keyword>
<keyword id="KW-0378">Hydrolase</keyword>
<keyword id="KW-0645">Protease</keyword>
<keyword id="KW-1185">Reference proteome</keyword>
<proteinExistence type="inferred from homology"/>
<reference key="1">
    <citation type="journal article" date="2005" name="Genome Res.">
        <title>Complete genome sequence of the hyperthermophilic archaeon Thermococcus kodakaraensis KOD1 and comparison with Pyrococcus genomes.</title>
        <authorList>
            <person name="Fukui T."/>
            <person name="Atomi H."/>
            <person name="Kanai T."/>
            <person name="Matsumi R."/>
            <person name="Fujiwara S."/>
            <person name="Imanaka T."/>
        </authorList>
    </citation>
    <scope>NUCLEOTIDE SEQUENCE [LARGE SCALE GENOMIC DNA]</scope>
    <source>
        <strain>ATCC BAA-918 / JCM 12380 / KOD1</strain>
    </source>
</reference>
<organism>
    <name type="scientific">Thermococcus kodakarensis (strain ATCC BAA-918 / JCM 12380 / KOD1)</name>
    <name type="common">Pyrococcus kodakaraensis (strain KOD1)</name>
    <dbReference type="NCBI Taxonomy" id="69014"/>
    <lineage>
        <taxon>Archaea</taxon>
        <taxon>Methanobacteriati</taxon>
        <taxon>Methanobacteriota</taxon>
        <taxon>Thermococci</taxon>
        <taxon>Thermococcales</taxon>
        <taxon>Thermococcaceae</taxon>
        <taxon>Thermococcus</taxon>
    </lineage>
</organism>
<gene>
    <name type="ordered locus">TK1284</name>
</gene>
<comment type="function">
    <text evidence="2">Deglycase that catalyzes the deglycation of the Maillard adducts formed between amino groups of proteins and reactive carbonyl groups of glyoxals. Thus, functions as a protein deglycase that repairs methylglyoxal- and glyoxal-glycated proteins, and releases repaired proteins and lactate or glycolate, respectively. Deglycates cysteine, arginine and lysine residues in proteins, and thus reactivates these proteins by reversing glycation by glyoxals. Acts on early glycation intermediates (hemithioacetals and aminocarbinols), preventing the formation of advanced glycation endproducts (AGE) that cause irreversible damage. Also displays proteolytic activity.</text>
</comment>
<comment type="catalytic activity">
    <reaction evidence="2">
        <text>N(omega)-(1-hydroxy-2-oxopropyl)-L-arginyl-[protein] + H2O = lactate + L-arginyl-[protein] + H(+)</text>
        <dbReference type="Rhea" id="RHEA:49548"/>
        <dbReference type="Rhea" id="RHEA-COMP:10532"/>
        <dbReference type="Rhea" id="RHEA-COMP:12428"/>
        <dbReference type="ChEBI" id="CHEBI:15377"/>
        <dbReference type="ChEBI" id="CHEBI:15378"/>
        <dbReference type="ChEBI" id="CHEBI:24996"/>
        <dbReference type="ChEBI" id="CHEBI:29965"/>
        <dbReference type="ChEBI" id="CHEBI:131708"/>
        <dbReference type="EC" id="3.5.1.124"/>
    </reaction>
</comment>
<comment type="catalytic activity">
    <reaction evidence="2">
        <text>N(6)-(1-hydroxy-2-oxopropyl)-L-lysyl-[protein] + H2O = lactate + L-lysyl-[protein] + H(+)</text>
        <dbReference type="Rhea" id="RHEA:49552"/>
        <dbReference type="Rhea" id="RHEA-COMP:9752"/>
        <dbReference type="Rhea" id="RHEA-COMP:12429"/>
        <dbReference type="ChEBI" id="CHEBI:15377"/>
        <dbReference type="ChEBI" id="CHEBI:15378"/>
        <dbReference type="ChEBI" id="CHEBI:24996"/>
        <dbReference type="ChEBI" id="CHEBI:29969"/>
        <dbReference type="ChEBI" id="CHEBI:131709"/>
        <dbReference type="EC" id="3.5.1.124"/>
    </reaction>
</comment>
<comment type="catalytic activity">
    <reaction evidence="2">
        <text>S-(1-hydroxy-2-oxopropyl)-L-cysteinyl-[protein] + H2O = lactate + L-cysteinyl-[protein] + H(+)</text>
        <dbReference type="Rhea" id="RHEA:49556"/>
        <dbReference type="Rhea" id="RHEA-COMP:10131"/>
        <dbReference type="Rhea" id="RHEA-COMP:12430"/>
        <dbReference type="ChEBI" id="CHEBI:15377"/>
        <dbReference type="ChEBI" id="CHEBI:15378"/>
        <dbReference type="ChEBI" id="CHEBI:24996"/>
        <dbReference type="ChEBI" id="CHEBI:29950"/>
        <dbReference type="ChEBI" id="CHEBI:131710"/>
        <dbReference type="EC" id="3.5.1.124"/>
    </reaction>
</comment>
<comment type="catalytic activity">
    <reaction evidence="2">
        <text>N(omega)-(1-hydroxy-2-oxoethyl)-L-arginyl-[protein] + H2O = L-arginyl-[protein] + glycolate + H(+)</text>
        <dbReference type="Rhea" id="RHEA:57188"/>
        <dbReference type="Rhea" id="RHEA-COMP:10532"/>
        <dbReference type="Rhea" id="RHEA-COMP:14844"/>
        <dbReference type="ChEBI" id="CHEBI:15377"/>
        <dbReference type="ChEBI" id="CHEBI:15378"/>
        <dbReference type="ChEBI" id="CHEBI:29805"/>
        <dbReference type="ChEBI" id="CHEBI:29965"/>
        <dbReference type="ChEBI" id="CHEBI:141553"/>
        <dbReference type="EC" id="3.5.1.124"/>
    </reaction>
</comment>
<comment type="catalytic activity">
    <reaction evidence="2">
        <text>N(6)-(1-hydroxy-2-oxoethyl)-L-lysyl-[protein] + H2O = glycolate + L-lysyl-[protein] + H(+)</text>
        <dbReference type="Rhea" id="RHEA:57192"/>
        <dbReference type="Rhea" id="RHEA-COMP:9752"/>
        <dbReference type="Rhea" id="RHEA-COMP:14845"/>
        <dbReference type="ChEBI" id="CHEBI:15377"/>
        <dbReference type="ChEBI" id="CHEBI:15378"/>
        <dbReference type="ChEBI" id="CHEBI:29805"/>
        <dbReference type="ChEBI" id="CHEBI:29969"/>
        <dbReference type="ChEBI" id="CHEBI:141554"/>
        <dbReference type="EC" id="3.5.1.124"/>
    </reaction>
</comment>
<comment type="catalytic activity">
    <reaction evidence="2">
        <text>S-(1-hydroxy-2-oxoethyl)-L-cysteinyl-[protein] + H2O = glycolate + L-cysteinyl-[protein] + H(+)</text>
        <dbReference type="Rhea" id="RHEA:57196"/>
        <dbReference type="Rhea" id="RHEA-COMP:10131"/>
        <dbReference type="Rhea" id="RHEA-COMP:14846"/>
        <dbReference type="ChEBI" id="CHEBI:15377"/>
        <dbReference type="ChEBI" id="CHEBI:15378"/>
        <dbReference type="ChEBI" id="CHEBI:29805"/>
        <dbReference type="ChEBI" id="CHEBI:29950"/>
        <dbReference type="ChEBI" id="CHEBI:141555"/>
        <dbReference type="EC" id="3.5.1.124"/>
    </reaction>
</comment>
<comment type="subunit">
    <text evidence="1">Homohexamer formed by a dimer of trimers that assemble into a hollow ring structure.</text>
</comment>
<comment type="subcellular location">
    <subcellularLocation>
        <location evidence="2">Cytoplasm</location>
    </subcellularLocation>
</comment>
<comment type="similarity">
    <text evidence="4">Belongs to the peptidase C56 family.</text>
</comment>
<dbReference type="EC" id="3.5.1.124" evidence="2"/>
<dbReference type="EC" id="3.4.22.-" evidence="2"/>
<dbReference type="EMBL" id="AP006878">
    <property type="protein sequence ID" value="BAD85473.1"/>
    <property type="molecule type" value="Genomic_DNA"/>
</dbReference>
<dbReference type="RefSeq" id="WP_011250235.1">
    <property type="nucleotide sequence ID" value="NC_006624.1"/>
</dbReference>
<dbReference type="SMR" id="Q5JGM7"/>
<dbReference type="FunCoup" id="Q5JGM7">
    <property type="interactions" value="80"/>
</dbReference>
<dbReference type="STRING" id="69014.TK1284"/>
<dbReference type="MEROPS" id="C56.001"/>
<dbReference type="EnsemblBacteria" id="BAD85473">
    <property type="protein sequence ID" value="BAD85473"/>
    <property type="gene ID" value="TK1284"/>
</dbReference>
<dbReference type="GeneID" id="78447801"/>
<dbReference type="KEGG" id="tko:TK1284"/>
<dbReference type="PATRIC" id="fig|69014.16.peg.1256"/>
<dbReference type="eggNOG" id="arCOG00769">
    <property type="taxonomic scope" value="Archaea"/>
</dbReference>
<dbReference type="HOGENOM" id="CLU_000445_44_4_2"/>
<dbReference type="InParanoid" id="Q5JGM7"/>
<dbReference type="OrthoDB" id="82036at2157"/>
<dbReference type="PhylomeDB" id="Q5JGM7"/>
<dbReference type="Proteomes" id="UP000000536">
    <property type="component" value="Chromosome"/>
</dbReference>
<dbReference type="GO" id="GO:0005737">
    <property type="term" value="C:cytoplasm"/>
    <property type="evidence" value="ECO:0007669"/>
    <property type="project" value="UniProtKB-SubCell"/>
</dbReference>
<dbReference type="GO" id="GO:0008233">
    <property type="term" value="F:peptidase activity"/>
    <property type="evidence" value="ECO:0007669"/>
    <property type="project" value="UniProtKB-KW"/>
</dbReference>
<dbReference type="GO" id="GO:0036524">
    <property type="term" value="F:protein deglycase activity"/>
    <property type="evidence" value="ECO:0007669"/>
    <property type="project" value="UniProtKB-EC"/>
</dbReference>
<dbReference type="GO" id="GO:0006508">
    <property type="term" value="P:proteolysis"/>
    <property type="evidence" value="ECO:0007669"/>
    <property type="project" value="UniProtKB-KW"/>
</dbReference>
<dbReference type="CDD" id="cd03134">
    <property type="entry name" value="GATase1_PfpI_like"/>
    <property type="match status" value="1"/>
</dbReference>
<dbReference type="Gene3D" id="3.40.50.880">
    <property type="match status" value="1"/>
</dbReference>
<dbReference type="InterPro" id="IPR006286">
    <property type="entry name" value="C56_PfpI-like"/>
</dbReference>
<dbReference type="InterPro" id="IPR029062">
    <property type="entry name" value="Class_I_gatase-like"/>
</dbReference>
<dbReference type="InterPro" id="IPR002818">
    <property type="entry name" value="DJ-1/PfpI"/>
</dbReference>
<dbReference type="InterPro" id="IPR053435">
    <property type="entry name" value="Peptidase_C56_Deglycase"/>
</dbReference>
<dbReference type="NCBIfam" id="NF040823">
    <property type="entry name" value="deglyc_PfpI"/>
    <property type="match status" value="1"/>
</dbReference>
<dbReference type="NCBIfam" id="TIGR01382">
    <property type="entry name" value="PfpI"/>
    <property type="match status" value="1"/>
</dbReference>
<dbReference type="PANTHER" id="PTHR42733">
    <property type="entry name" value="DJ-1 PROTEIN"/>
    <property type="match status" value="1"/>
</dbReference>
<dbReference type="PANTHER" id="PTHR42733:SF2">
    <property type="entry name" value="DJ-1_THIJ_PFPI FAMILY PROTEIN"/>
    <property type="match status" value="1"/>
</dbReference>
<dbReference type="Pfam" id="PF01965">
    <property type="entry name" value="DJ-1_PfpI"/>
    <property type="match status" value="1"/>
</dbReference>
<dbReference type="SUPFAM" id="SSF52317">
    <property type="entry name" value="Class I glutamine amidotransferase-like"/>
    <property type="match status" value="1"/>
</dbReference>
<dbReference type="PROSITE" id="PS51276">
    <property type="entry name" value="PEPTIDASE_C56_PFPI"/>
    <property type="match status" value="1"/>
</dbReference>
<protein>
    <recommendedName>
        <fullName evidence="2">Deglycase TK1284</fullName>
        <ecNumber evidence="2">3.5.1.124</ecNumber>
    </recommendedName>
    <alternativeName>
        <fullName evidence="2">Intracellular protease TK1284</fullName>
        <ecNumber evidence="2">3.4.22.-</ecNumber>
    </alternativeName>
</protein>
<feature type="chain" id="PRO_0000157828" description="Deglycase TK1284">
    <location>
        <begin position="1"/>
        <end position="166"/>
    </location>
</feature>
<feature type="domain" description="PfpI endopeptidase" evidence="3">
    <location>
        <begin position="1"/>
        <end position="166"/>
    </location>
</feature>
<feature type="active site" evidence="3">
    <location>
        <position position="101"/>
    </location>
</feature>
<evidence type="ECO:0000250" key="1">
    <source>
        <dbReference type="UniProtKB" id="O59413"/>
    </source>
</evidence>
<evidence type="ECO:0000250" key="2">
    <source>
        <dbReference type="UniProtKB" id="Q51732"/>
    </source>
</evidence>
<evidence type="ECO:0000255" key="3">
    <source>
        <dbReference type="PROSITE-ProRule" id="PRU00608"/>
    </source>
</evidence>
<evidence type="ECO:0000305" key="4"/>
<accession>Q5JGM7</accession>
<name>DEGLY_THEKO</name>
<sequence length="166" mass="18415">MKVLILSADGFEDLELIYPLHRIKEEGHEVYVASFQRGKITGKHGYTVNVDLAFDEVDPDEFDALVLPGGRAPEIVRLNEKAVAITKKMFEDGKPVASICHGPQILISAGVLKGRKGTSTVTIRDDVKNAGAEWIDAEVVVDGNWVSSRHPGDLYAWMREFVKLLR</sequence>